<organism>
    <name type="scientific">Lactobacillus delbrueckii subsp. bulgaricus (strain ATCC BAA-365 / Lb-18)</name>
    <dbReference type="NCBI Taxonomy" id="321956"/>
    <lineage>
        <taxon>Bacteria</taxon>
        <taxon>Bacillati</taxon>
        <taxon>Bacillota</taxon>
        <taxon>Bacilli</taxon>
        <taxon>Lactobacillales</taxon>
        <taxon>Lactobacillaceae</taxon>
        <taxon>Lactobacillus</taxon>
    </lineage>
</organism>
<comment type="function">
    <text evidence="1">Required for accurate and efficient protein synthesis under certain stress conditions. May act as a fidelity factor of the translation reaction, by catalyzing a one-codon backward translocation of tRNAs on improperly translocated ribosomes. Back-translocation proceeds from a post-translocation (POST) complex to a pre-translocation (PRE) complex, thus giving elongation factor G a second chance to translocate the tRNAs correctly. Binds to ribosomes in a GTP-dependent manner.</text>
</comment>
<comment type="catalytic activity">
    <reaction evidence="1">
        <text>GTP + H2O = GDP + phosphate + H(+)</text>
        <dbReference type="Rhea" id="RHEA:19669"/>
        <dbReference type="ChEBI" id="CHEBI:15377"/>
        <dbReference type="ChEBI" id="CHEBI:15378"/>
        <dbReference type="ChEBI" id="CHEBI:37565"/>
        <dbReference type="ChEBI" id="CHEBI:43474"/>
        <dbReference type="ChEBI" id="CHEBI:58189"/>
        <dbReference type="EC" id="3.6.5.n1"/>
    </reaction>
</comment>
<comment type="subcellular location">
    <subcellularLocation>
        <location evidence="1">Cell membrane</location>
        <topology evidence="1">Peripheral membrane protein</topology>
        <orientation evidence="1">Cytoplasmic side</orientation>
    </subcellularLocation>
</comment>
<comment type="similarity">
    <text evidence="1">Belongs to the TRAFAC class translation factor GTPase superfamily. Classic translation factor GTPase family. LepA subfamily.</text>
</comment>
<proteinExistence type="inferred from homology"/>
<keyword id="KW-1003">Cell membrane</keyword>
<keyword id="KW-0342">GTP-binding</keyword>
<keyword id="KW-0378">Hydrolase</keyword>
<keyword id="KW-0472">Membrane</keyword>
<keyword id="KW-0547">Nucleotide-binding</keyword>
<keyword id="KW-0648">Protein biosynthesis</keyword>
<evidence type="ECO:0000255" key="1">
    <source>
        <dbReference type="HAMAP-Rule" id="MF_00071"/>
    </source>
</evidence>
<reference key="1">
    <citation type="journal article" date="2006" name="Proc. Natl. Acad. Sci. U.S.A.">
        <title>Comparative genomics of the lactic acid bacteria.</title>
        <authorList>
            <person name="Makarova K.S."/>
            <person name="Slesarev A."/>
            <person name="Wolf Y.I."/>
            <person name="Sorokin A."/>
            <person name="Mirkin B."/>
            <person name="Koonin E.V."/>
            <person name="Pavlov A."/>
            <person name="Pavlova N."/>
            <person name="Karamychev V."/>
            <person name="Polouchine N."/>
            <person name="Shakhova V."/>
            <person name="Grigoriev I."/>
            <person name="Lou Y."/>
            <person name="Rohksar D."/>
            <person name="Lucas S."/>
            <person name="Huang K."/>
            <person name="Goodstein D.M."/>
            <person name="Hawkins T."/>
            <person name="Plengvidhya V."/>
            <person name="Welker D."/>
            <person name="Hughes J."/>
            <person name="Goh Y."/>
            <person name="Benson A."/>
            <person name="Baldwin K."/>
            <person name="Lee J.-H."/>
            <person name="Diaz-Muniz I."/>
            <person name="Dosti B."/>
            <person name="Smeianov V."/>
            <person name="Wechter W."/>
            <person name="Barabote R."/>
            <person name="Lorca G."/>
            <person name="Altermann E."/>
            <person name="Barrangou R."/>
            <person name="Ganesan B."/>
            <person name="Xie Y."/>
            <person name="Rawsthorne H."/>
            <person name="Tamir D."/>
            <person name="Parker C."/>
            <person name="Breidt F."/>
            <person name="Broadbent J.R."/>
            <person name="Hutkins R."/>
            <person name="O'Sullivan D."/>
            <person name="Steele J."/>
            <person name="Unlu G."/>
            <person name="Saier M.H. Jr."/>
            <person name="Klaenhammer T."/>
            <person name="Richardson P."/>
            <person name="Kozyavkin S."/>
            <person name="Weimer B.C."/>
            <person name="Mills D.A."/>
        </authorList>
    </citation>
    <scope>NUCLEOTIDE SEQUENCE [LARGE SCALE GENOMIC DNA]</scope>
    <source>
        <strain>ATCC BAA-365 / Lb-18</strain>
    </source>
</reference>
<gene>
    <name evidence="1" type="primary">lepA</name>
    <name type="ordered locus">LBUL_1225</name>
</gene>
<accession>Q049W8</accession>
<dbReference type="EC" id="3.6.5.n1" evidence="1"/>
<dbReference type="EMBL" id="CP000412">
    <property type="protein sequence ID" value="ABJ58754.1"/>
    <property type="molecule type" value="Genomic_DNA"/>
</dbReference>
<dbReference type="RefSeq" id="WP_003618625.1">
    <property type="nucleotide sequence ID" value="NC_008529.1"/>
</dbReference>
<dbReference type="SMR" id="Q049W8"/>
<dbReference type="KEGG" id="lbu:LBUL_1225"/>
<dbReference type="HOGENOM" id="CLU_009995_3_3_9"/>
<dbReference type="BioCyc" id="LDEL321956:LBUL_RS05730-MONOMER"/>
<dbReference type="GO" id="GO:0005886">
    <property type="term" value="C:plasma membrane"/>
    <property type="evidence" value="ECO:0007669"/>
    <property type="project" value="UniProtKB-SubCell"/>
</dbReference>
<dbReference type="GO" id="GO:0005525">
    <property type="term" value="F:GTP binding"/>
    <property type="evidence" value="ECO:0007669"/>
    <property type="project" value="UniProtKB-UniRule"/>
</dbReference>
<dbReference type="GO" id="GO:0003924">
    <property type="term" value="F:GTPase activity"/>
    <property type="evidence" value="ECO:0007669"/>
    <property type="project" value="UniProtKB-UniRule"/>
</dbReference>
<dbReference type="GO" id="GO:0043022">
    <property type="term" value="F:ribosome binding"/>
    <property type="evidence" value="ECO:0007669"/>
    <property type="project" value="UniProtKB-UniRule"/>
</dbReference>
<dbReference type="GO" id="GO:0003746">
    <property type="term" value="F:translation elongation factor activity"/>
    <property type="evidence" value="ECO:0007669"/>
    <property type="project" value="UniProtKB-UniRule"/>
</dbReference>
<dbReference type="GO" id="GO:0045727">
    <property type="term" value="P:positive regulation of translation"/>
    <property type="evidence" value="ECO:0007669"/>
    <property type="project" value="UniProtKB-UniRule"/>
</dbReference>
<dbReference type="CDD" id="cd03699">
    <property type="entry name" value="EF4_II"/>
    <property type="match status" value="1"/>
</dbReference>
<dbReference type="CDD" id="cd16260">
    <property type="entry name" value="EF4_III"/>
    <property type="match status" value="1"/>
</dbReference>
<dbReference type="CDD" id="cd01890">
    <property type="entry name" value="LepA"/>
    <property type="match status" value="1"/>
</dbReference>
<dbReference type="CDD" id="cd03709">
    <property type="entry name" value="lepA_C"/>
    <property type="match status" value="1"/>
</dbReference>
<dbReference type="FunFam" id="3.40.50.300:FF:000078">
    <property type="entry name" value="Elongation factor 4"/>
    <property type="match status" value="1"/>
</dbReference>
<dbReference type="FunFam" id="2.40.30.10:FF:000015">
    <property type="entry name" value="Translation factor GUF1, mitochondrial"/>
    <property type="match status" value="1"/>
</dbReference>
<dbReference type="FunFam" id="3.30.70.240:FF:000007">
    <property type="entry name" value="Translation factor GUF1, mitochondrial"/>
    <property type="match status" value="1"/>
</dbReference>
<dbReference type="FunFam" id="3.30.70.2570:FF:000001">
    <property type="entry name" value="Translation factor GUF1, mitochondrial"/>
    <property type="match status" value="1"/>
</dbReference>
<dbReference type="FunFam" id="3.30.70.870:FF:000004">
    <property type="entry name" value="Translation factor GUF1, mitochondrial"/>
    <property type="match status" value="1"/>
</dbReference>
<dbReference type="Gene3D" id="3.30.70.240">
    <property type="match status" value="1"/>
</dbReference>
<dbReference type="Gene3D" id="3.30.70.2570">
    <property type="entry name" value="Elongation factor 4, C-terminal domain"/>
    <property type="match status" value="1"/>
</dbReference>
<dbReference type="Gene3D" id="3.30.70.870">
    <property type="entry name" value="Elongation Factor G (Translational Gtpase), domain 3"/>
    <property type="match status" value="1"/>
</dbReference>
<dbReference type="Gene3D" id="3.40.50.300">
    <property type="entry name" value="P-loop containing nucleotide triphosphate hydrolases"/>
    <property type="match status" value="1"/>
</dbReference>
<dbReference type="Gene3D" id="2.40.30.10">
    <property type="entry name" value="Translation factors"/>
    <property type="match status" value="1"/>
</dbReference>
<dbReference type="HAMAP" id="MF_00071">
    <property type="entry name" value="LepA"/>
    <property type="match status" value="1"/>
</dbReference>
<dbReference type="InterPro" id="IPR006297">
    <property type="entry name" value="EF-4"/>
</dbReference>
<dbReference type="InterPro" id="IPR041095">
    <property type="entry name" value="EFG_II"/>
</dbReference>
<dbReference type="InterPro" id="IPR035647">
    <property type="entry name" value="EFG_III/V"/>
</dbReference>
<dbReference type="InterPro" id="IPR000640">
    <property type="entry name" value="EFG_V-like"/>
</dbReference>
<dbReference type="InterPro" id="IPR004161">
    <property type="entry name" value="EFTu-like_2"/>
</dbReference>
<dbReference type="InterPro" id="IPR038363">
    <property type="entry name" value="LepA_C_sf"/>
</dbReference>
<dbReference type="InterPro" id="IPR013842">
    <property type="entry name" value="LepA_CTD"/>
</dbReference>
<dbReference type="InterPro" id="IPR035654">
    <property type="entry name" value="LepA_IV"/>
</dbReference>
<dbReference type="InterPro" id="IPR027417">
    <property type="entry name" value="P-loop_NTPase"/>
</dbReference>
<dbReference type="InterPro" id="IPR005225">
    <property type="entry name" value="Small_GTP-bd"/>
</dbReference>
<dbReference type="InterPro" id="IPR000795">
    <property type="entry name" value="T_Tr_GTP-bd_dom"/>
</dbReference>
<dbReference type="InterPro" id="IPR009000">
    <property type="entry name" value="Transl_B-barrel_sf"/>
</dbReference>
<dbReference type="NCBIfam" id="TIGR01393">
    <property type="entry name" value="lepA"/>
    <property type="match status" value="1"/>
</dbReference>
<dbReference type="NCBIfam" id="TIGR00231">
    <property type="entry name" value="small_GTP"/>
    <property type="match status" value="1"/>
</dbReference>
<dbReference type="PANTHER" id="PTHR43512:SF4">
    <property type="entry name" value="TRANSLATION FACTOR GUF1 HOMOLOG, CHLOROPLASTIC"/>
    <property type="match status" value="1"/>
</dbReference>
<dbReference type="PANTHER" id="PTHR43512">
    <property type="entry name" value="TRANSLATION FACTOR GUF1-RELATED"/>
    <property type="match status" value="1"/>
</dbReference>
<dbReference type="Pfam" id="PF00679">
    <property type="entry name" value="EFG_C"/>
    <property type="match status" value="1"/>
</dbReference>
<dbReference type="Pfam" id="PF14492">
    <property type="entry name" value="EFG_III"/>
    <property type="match status" value="1"/>
</dbReference>
<dbReference type="Pfam" id="PF00009">
    <property type="entry name" value="GTP_EFTU"/>
    <property type="match status" value="1"/>
</dbReference>
<dbReference type="Pfam" id="PF03144">
    <property type="entry name" value="GTP_EFTU_D2"/>
    <property type="match status" value="1"/>
</dbReference>
<dbReference type="Pfam" id="PF06421">
    <property type="entry name" value="LepA_C"/>
    <property type="match status" value="1"/>
</dbReference>
<dbReference type="PRINTS" id="PR00315">
    <property type="entry name" value="ELONGATNFCT"/>
</dbReference>
<dbReference type="SMART" id="SM00838">
    <property type="entry name" value="EFG_C"/>
    <property type="match status" value="1"/>
</dbReference>
<dbReference type="SUPFAM" id="SSF54980">
    <property type="entry name" value="EF-G C-terminal domain-like"/>
    <property type="match status" value="2"/>
</dbReference>
<dbReference type="SUPFAM" id="SSF52540">
    <property type="entry name" value="P-loop containing nucleoside triphosphate hydrolases"/>
    <property type="match status" value="1"/>
</dbReference>
<dbReference type="SUPFAM" id="SSF50447">
    <property type="entry name" value="Translation proteins"/>
    <property type="match status" value="1"/>
</dbReference>
<dbReference type="PROSITE" id="PS51722">
    <property type="entry name" value="G_TR_2"/>
    <property type="match status" value="1"/>
</dbReference>
<protein>
    <recommendedName>
        <fullName evidence="1">Elongation factor 4</fullName>
        <shortName evidence="1">EF-4</shortName>
        <ecNumber evidence="1">3.6.5.n1</ecNumber>
    </recommendedName>
    <alternativeName>
        <fullName evidence="1">Ribosomal back-translocase LepA</fullName>
    </alternativeName>
</protein>
<sequence>MDLEKLKDYQKHIRNFSIVAHVDHGKSTIADRILELTDTVSKRQLKNQMLDDMPLERQRGITIKMNSVQVKYHANDGEDYIFHLIDTPGHVDFSYEVSRSLAACEGAVLVVDASQGVQAQTLSNTYLALENDLEILPVLNKIDLPSADPDMAKSEIGDMLGLDASDAVEVSGKTGAGIPELLERIVTDISAPTGDLTKPLKALIFDSKYDDYRGVVMSVRIEEGTVKPGDEIMIMNTGKKYEVTEVGVSSPHPVKEDILIAGDVGYITANIKSVRETRVGDTITSAENPTAEALPGYRQIPPMVYSGMYPTDNRDYDDLKEALQKLQLNDASLEFEPETSQALGFGFRCGFLGLLHMDVVQERLEQEFDLDLIMTAPSVDYHAIMPTGEVKLIDNPADLPDAGEYKELQEPYVKAEIMVPNDFVGAVMQLCEGKRGEFQTMDYLDKYRVNVIYEMPLAEIIYDFFDQLKSSTKGYASLDYEIIGYKATNLVKIDILLNKEPIDALSFIAHREEARDRAVQMCSLLKKLIPRQNFQVDIQGAIGSKIISRATIKPYRKDVTWKIHTGDPDRRAKLLEKQKRGKKRMKSVGRVEVPQDAFMAVLRMNDDDINGK</sequence>
<name>LEPA_LACDB</name>
<feature type="chain" id="PRO_1000032010" description="Elongation factor 4">
    <location>
        <begin position="1"/>
        <end position="612"/>
    </location>
</feature>
<feature type="domain" description="tr-type G">
    <location>
        <begin position="11"/>
        <end position="193"/>
    </location>
</feature>
<feature type="binding site" evidence="1">
    <location>
        <begin position="23"/>
        <end position="28"/>
    </location>
    <ligand>
        <name>GTP</name>
        <dbReference type="ChEBI" id="CHEBI:37565"/>
    </ligand>
</feature>
<feature type="binding site" evidence="1">
    <location>
        <begin position="140"/>
        <end position="143"/>
    </location>
    <ligand>
        <name>GTP</name>
        <dbReference type="ChEBI" id="CHEBI:37565"/>
    </ligand>
</feature>